<feature type="chain" id="PRO_0000058429" description="PRKCA-binding protein">
    <location>
        <begin position="1"/>
        <end position="416"/>
    </location>
</feature>
<feature type="domain" description="PDZ" evidence="4">
    <location>
        <begin position="22"/>
        <end position="105"/>
    </location>
</feature>
<feature type="domain" description="AH" evidence="5">
    <location>
        <begin position="144"/>
        <end position="357"/>
    </location>
</feature>
<feature type="region of interest" description="Disordered" evidence="6">
    <location>
        <begin position="373"/>
        <end position="416"/>
    </location>
</feature>
<feature type="compositionally biased region" description="Acidic residues" evidence="6">
    <location>
        <begin position="380"/>
        <end position="390"/>
    </location>
</feature>
<feature type="compositionally biased region" description="Basic and acidic residues" evidence="6">
    <location>
        <begin position="391"/>
        <end position="401"/>
    </location>
</feature>
<feature type="binding site" evidence="21">
    <location>
        <position position="44"/>
    </location>
    <ligand>
        <name>Zn(2+)</name>
        <dbReference type="ChEBI" id="CHEBI:29105"/>
    </ligand>
</feature>
<feature type="binding site" evidence="21">
    <location>
        <position position="46"/>
    </location>
    <ligand>
        <name>Zn(2+)</name>
        <dbReference type="ChEBI" id="CHEBI:29105"/>
    </ligand>
</feature>
<feature type="modified residue" description="Phosphothreonine" evidence="3">
    <location>
        <position position="82"/>
    </location>
</feature>
<feature type="lipid moiety-binding region" description="S-palmitoyl cysteine; by DHHC8" evidence="1">
    <location>
        <position position="414"/>
    </location>
</feature>
<feature type="mutagenesis site" description="Abolishes interaction with other proteins, but not with itself." evidence="7 9 11 20">
    <original>KD</original>
    <variation>AA</variation>
    <location>
        <begin position="27"/>
        <end position="28"/>
    </location>
</feature>
<feature type="mutagenesis site" description="Decreased lipid membrane binding, but no effect on peptide ligand recognition." evidence="15">
    <original>C</original>
    <variation>G</variation>
    <location>
        <position position="44"/>
    </location>
</feature>
<feature type="mutagenesis site" description="Decreased lipid membrane binding, but no effect on peptide ligand recognition." evidence="15">
    <original>C</original>
    <variation>G</variation>
    <location>
        <position position="46"/>
    </location>
</feature>
<feature type="mutagenesis site" description="No effect on lipid membrane binding." evidence="15">
    <original>K</original>
    <variation>E</variation>
    <location>
        <position position="79"/>
    </location>
</feature>
<feature type="mutagenesis site" description="No effect on lipid membrane binding." evidence="15">
    <original>K</original>
    <variation>E</variation>
    <location>
        <position position="81"/>
    </location>
</feature>
<feature type="mutagenesis site" description="Abolishes F-actin binding and the inhibitory function on Arp2/3 complex-mediated actin nucleation, impairs lipid vesicle interaction, no effect on Arp2/3 complex association." evidence="16">
    <original>KK</original>
    <variation>EE</variation>
    <location>
        <begin position="251"/>
        <end position="252"/>
    </location>
</feature>
<feature type="mutagenesis site" description="Abolishes association with Arp2/3 complex and the inhibitory function on Arp2/3 complex-mediated actin nucleation." evidence="16">
    <original>W</original>
    <variation>A</variation>
    <location>
        <position position="413"/>
    </location>
</feature>
<feature type="sequence conflict" description="In Ref. 3; AAK54603." evidence="21" ref="3">
    <original>RG</original>
    <variation>TW</variation>
    <location>
        <begin position="401"/>
        <end position="402"/>
    </location>
</feature>
<feature type="strand" evidence="24">
    <location>
        <begin position="18"/>
        <end position="26"/>
    </location>
</feature>
<feature type="strand" evidence="24">
    <location>
        <begin position="35"/>
        <end position="39"/>
    </location>
</feature>
<feature type="strand" evidence="23">
    <location>
        <begin position="41"/>
        <end position="43"/>
    </location>
</feature>
<feature type="strand" evidence="24">
    <location>
        <begin position="45"/>
        <end position="52"/>
    </location>
</feature>
<feature type="helix" evidence="24">
    <location>
        <begin position="57"/>
        <end position="61"/>
    </location>
</feature>
<feature type="strand" evidence="24">
    <location>
        <begin position="69"/>
        <end position="73"/>
    </location>
</feature>
<feature type="strand" evidence="22">
    <location>
        <begin position="76"/>
        <end position="78"/>
    </location>
</feature>
<feature type="helix" evidence="24">
    <location>
        <begin position="83"/>
        <end position="92"/>
    </location>
</feature>
<feature type="strand" evidence="24">
    <location>
        <begin position="95"/>
        <end position="104"/>
    </location>
</feature>
<protein>
    <recommendedName>
        <fullName>PRKCA-binding protein</fullName>
    </recommendedName>
    <alternativeName>
        <fullName>Protein interacting with C kinase 1</fullName>
    </alternativeName>
    <alternativeName>
        <fullName>Protein kinase C-alpha-binding protein</fullName>
    </alternativeName>
</protein>
<dbReference type="EMBL" id="AF327562">
    <property type="protein sequence ID" value="AAG48152.1"/>
    <property type="molecule type" value="mRNA"/>
</dbReference>
<dbReference type="EMBL" id="AJ240083">
    <property type="protein sequence ID" value="CAC17808.2"/>
    <property type="molecule type" value="mRNA"/>
</dbReference>
<dbReference type="EMBL" id="AF373289">
    <property type="protein sequence ID" value="AAK54603.1"/>
    <property type="molecule type" value="mRNA"/>
</dbReference>
<dbReference type="EMBL" id="AF542094">
    <property type="protein sequence ID" value="AAO49507.1"/>
    <property type="molecule type" value="mRNA"/>
</dbReference>
<dbReference type="RefSeq" id="NP_445912.1">
    <property type="nucleotide sequence ID" value="NM_053460.1"/>
</dbReference>
<dbReference type="PDB" id="2LUI">
    <property type="method" value="NMR"/>
    <property type="chains" value="A=19-110"/>
</dbReference>
<dbReference type="PDB" id="2PKU">
    <property type="method" value="NMR"/>
    <property type="chains" value="A=18-104"/>
</dbReference>
<dbReference type="PDB" id="3HPK">
    <property type="method" value="X-ray"/>
    <property type="resolution" value="2.20 A"/>
    <property type="chains" value="A/B=1-110"/>
</dbReference>
<dbReference type="PDB" id="3HPM">
    <property type="method" value="X-ray"/>
    <property type="resolution" value="2.80 A"/>
    <property type="chains" value="A/B=19-110"/>
</dbReference>
<dbReference type="PDBsum" id="2LUI"/>
<dbReference type="PDBsum" id="2PKU"/>
<dbReference type="PDBsum" id="3HPK"/>
<dbReference type="PDBsum" id="3HPM"/>
<dbReference type="SASBDB" id="Q9EP80"/>
<dbReference type="SMR" id="Q9EP80"/>
<dbReference type="BioGRID" id="250021">
    <property type="interactions" value="11"/>
</dbReference>
<dbReference type="CORUM" id="Q9EP80"/>
<dbReference type="DIP" id="DIP-30941N"/>
<dbReference type="ELM" id="Q9EP80"/>
<dbReference type="FunCoup" id="Q9EP80">
    <property type="interactions" value="931"/>
</dbReference>
<dbReference type="IntAct" id="Q9EP80">
    <property type="interactions" value="14"/>
</dbReference>
<dbReference type="MINT" id="Q9EP80"/>
<dbReference type="STRING" id="10116.ENSRNOP00000016077"/>
<dbReference type="iPTMnet" id="Q9EP80"/>
<dbReference type="PhosphoSitePlus" id="Q9EP80"/>
<dbReference type="SwissPalm" id="Q9EP80"/>
<dbReference type="jPOST" id="Q9EP80"/>
<dbReference type="PaxDb" id="10116-ENSRNOP00000016077"/>
<dbReference type="ABCD" id="Q9EP80">
    <property type="antibodies" value="1 sequenced antibody"/>
</dbReference>
<dbReference type="GeneID" id="84591"/>
<dbReference type="KEGG" id="rno:84591"/>
<dbReference type="UCSC" id="RGD:69437">
    <property type="organism name" value="rat"/>
</dbReference>
<dbReference type="AGR" id="RGD:69437"/>
<dbReference type="CTD" id="9463"/>
<dbReference type="RGD" id="69437">
    <property type="gene designation" value="Pick1"/>
</dbReference>
<dbReference type="eggNOG" id="KOG3651">
    <property type="taxonomic scope" value="Eukaryota"/>
</dbReference>
<dbReference type="InParanoid" id="Q9EP80"/>
<dbReference type="OrthoDB" id="5917245at2759"/>
<dbReference type="PhylomeDB" id="Q9EP80"/>
<dbReference type="Reactome" id="R-RNO-416993">
    <property type="pathway name" value="Trafficking of GluR2-containing AMPA receptors"/>
</dbReference>
<dbReference type="EvolutionaryTrace" id="Q9EP80"/>
<dbReference type="PRO" id="PR:Q9EP80"/>
<dbReference type="Proteomes" id="UP000002494">
    <property type="component" value="Unplaced"/>
</dbReference>
<dbReference type="GO" id="GO:0005737">
    <property type="term" value="C:cytoplasm"/>
    <property type="evidence" value="ECO:0000250"/>
    <property type="project" value="UniProtKB"/>
</dbReference>
<dbReference type="GO" id="GO:0005856">
    <property type="term" value="C:cytoskeleton"/>
    <property type="evidence" value="ECO:0007669"/>
    <property type="project" value="UniProtKB-SubCell"/>
</dbReference>
<dbReference type="GO" id="GO:0030425">
    <property type="term" value="C:dendrite"/>
    <property type="evidence" value="ECO:0000314"/>
    <property type="project" value="RGD"/>
</dbReference>
<dbReference type="GO" id="GO:0043197">
    <property type="term" value="C:dendritic spine"/>
    <property type="evidence" value="ECO:0000314"/>
    <property type="project" value="RGD"/>
</dbReference>
<dbReference type="GO" id="GO:0098978">
    <property type="term" value="C:glutamatergic synapse"/>
    <property type="evidence" value="ECO:0000314"/>
    <property type="project" value="SynGO"/>
</dbReference>
<dbReference type="GO" id="GO:0005794">
    <property type="term" value="C:Golgi apparatus"/>
    <property type="evidence" value="ECO:0000250"/>
    <property type="project" value="UniProtKB"/>
</dbReference>
<dbReference type="GO" id="GO:0005739">
    <property type="term" value="C:mitochondrion"/>
    <property type="evidence" value="ECO:0000266"/>
    <property type="project" value="RGD"/>
</dbReference>
<dbReference type="GO" id="GO:0043005">
    <property type="term" value="C:neuron projection"/>
    <property type="evidence" value="ECO:0000314"/>
    <property type="project" value="UniProtKB"/>
</dbReference>
<dbReference type="GO" id="GO:0048471">
    <property type="term" value="C:perinuclear region of cytoplasm"/>
    <property type="evidence" value="ECO:0000314"/>
    <property type="project" value="RGD"/>
</dbReference>
<dbReference type="GO" id="GO:0005886">
    <property type="term" value="C:plasma membrane"/>
    <property type="evidence" value="ECO:0000250"/>
    <property type="project" value="UniProtKB"/>
</dbReference>
<dbReference type="GO" id="GO:0014069">
    <property type="term" value="C:postsynaptic density"/>
    <property type="evidence" value="ECO:0000314"/>
    <property type="project" value="UniProtKB"/>
</dbReference>
<dbReference type="GO" id="GO:0098843">
    <property type="term" value="C:postsynaptic endocytic zone"/>
    <property type="evidence" value="ECO:0000314"/>
    <property type="project" value="SynGO"/>
</dbReference>
<dbReference type="GO" id="GO:0099572">
    <property type="term" value="C:postsynaptic specialization"/>
    <property type="evidence" value="ECO:0000314"/>
    <property type="project" value="SynGO"/>
</dbReference>
<dbReference type="GO" id="GO:0042734">
    <property type="term" value="C:presynaptic membrane"/>
    <property type="evidence" value="ECO:0000250"/>
    <property type="project" value="UniProtKB"/>
</dbReference>
<dbReference type="GO" id="GO:0032991">
    <property type="term" value="C:protein-containing complex"/>
    <property type="evidence" value="ECO:0000314"/>
    <property type="project" value="UniProtKB"/>
</dbReference>
<dbReference type="GO" id="GO:0045202">
    <property type="term" value="C:synapse"/>
    <property type="evidence" value="ECO:0000314"/>
    <property type="project" value="UniProtKB"/>
</dbReference>
<dbReference type="GO" id="GO:0008021">
    <property type="term" value="C:synaptic vesicle"/>
    <property type="evidence" value="ECO:0000314"/>
    <property type="project" value="SynGO"/>
</dbReference>
<dbReference type="GO" id="GO:0032588">
    <property type="term" value="C:trans-Golgi network membrane"/>
    <property type="evidence" value="ECO:0000318"/>
    <property type="project" value="GO_Central"/>
</dbReference>
<dbReference type="GO" id="GO:0051015">
    <property type="term" value="F:actin filament binding"/>
    <property type="evidence" value="ECO:0000314"/>
    <property type="project" value="UniProtKB"/>
</dbReference>
<dbReference type="GO" id="GO:0071933">
    <property type="term" value="F:Arp2/3 complex binding"/>
    <property type="evidence" value="ECO:0000314"/>
    <property type="project" value="UniProtKB"/>
</dbReference>
<dbReference type="GO" id="GO:0008092">
    <property type="term" value="F:cytoskeletal protein binding"/>
    <property type="evidence" value="ECO:0000353"/>
    <property type="project" value="RGD"/>
</dbReference>
<dbReference type="GO" id="GO:0046875">
    <property type="term" value="F:ephrin receptor binding"/>
    <property type="evidence" value="ECO:0000304"/>
    <property type="project" value="UniProtKB"/>
</dbReference>
<dbReference type="GO" id="GO:0035256">
    <property type="term" value="F:G protein-coupled glutamate receptor binding"/>
    <property type="evidence" value="ECO:0000353"/>
    <property type="project" value="RGD"/>
</dbReference>
<dbReference type="GO" id="GO:0001664">
    <property type="term" value="F:G protein-coupled receptor binding"/>
    <property type="evidence" value="ECO:0000353"/>
    <property type="project" value="ParkinsonsUK-UCL"/>
</dbReference>
<dbReference type="GO" id="GO:0051020">
    <property type="term" value="F:GTPase binding"/>
    <property type="evidence" value="ECO:0000304"/>
    <property type="project" value="UniProtKB"/>
</dbReference>
<dbReference type="GO" id="GO:0042802">
    <property type="term" value="F:identical protein binding"/>
    <property type="evidence" value="ECO:0000314"/>
    <property type="project" value="UniProtKB"/>
</dbReference>
<dbReference type="GO" id="GO:0035255">
    <property type="term" value="F:ionotropic glutamate receptor binding"/>
    <property type="evidence" value="ECO:0000353"/>
    <property type="project" value="UniProtKB"/>
</dbReference>
<dbReference type="GO" id="GO:0140090">
    <property type="term" value="F:membrane curvature sensor activity"/>
    <property type="evidence" value="ECO:0000266"/>
    <property type="project" value="RGD"/>
</dbReference>
<dbReference type="GO" id="GO:0046872">
    <property type="term" value="F:metal ion binding"/>
    <property type="evidence" value="ECO:0007669"/>
    <property type="project" value="UniProtKB-KW"/>
</dbReference>
<dbReference type="GO" id="GO:0005543">
    <property type="term" value="F:phospholipid binding"/>
    <property type="evidence" value="ECO:0000318"/>
    <property type="project" value="GO_Central"/>
</dbReference>
<dbReference type="GO" id="GO:0019904">
    <property type="term" value="F:protein domain specific binding"/>
    <property type="evidence" value="ECO:0000315"/>
    <property type="project" value="RGD"/>
</dbReference>
<dbReference type="GO" id="GO:0005080">
    <property type="term" value="F:protein kinase C binding"/>
    <property type="evidence" value="ECO:0000314"/>
    <property type="project" value="UniProtKB"/>
</dbReference>
<dbReference type="GO" id="GO:0030971">
    <property type="term" value="F:receptor tyrosine kinase binding"/>
    <property type="evidence" value="ECO:0000304"/>
    <property type="project" value="UniProtKB"/>
</dbReference>
<dbReference type="GO" id="GO:0005102">
    <property type="term" value="F:signaling receptor binding"/>
    <property type="evidence" value="ECO:0000250"/>
    <property type="project" value="UniProtKB"/>
</dbReference>
<dbReference type="GO" id="GO:0005484">
    <property type="term" value="F:SNAP receptor activity"/>
    <property type="evidence" value="ECO:0000314"/>
    <property type="project" value="UniProtKB"/>
</dbReference>
<dbReference type="GO" id="GO:0036294">
    <property type="term" value="P:cellular response to decreased oxygen levels"/>
    <property type="evidence" value="ECO:0000315"/>
    <property type="project" value="UniProtKB"/>
</dbReference>
<dbReference type="GO" id="GO:0042149">
    <property type="term" value="P:cellular response to glucose starvation"/>
    <property type="evidence" value="ECO:0000315"/>
    <property type="project" value="UniProtKB"/>
</dbReference>
<dbReference type="GO" id="GO:0097062">
    <property type="term" value="P:dendritic spine maintenance"/>
    <property type="evidence" value="ECO:0000315"/>
    <property type="project" value="UniProtKB"/>
</dbReference>
<dbReference type="GO" id="GO:0097061">
    <property type="term" value="P:dendritic spine organization"/>
    <property type="evidence" value="ECO:0000314"/>
    <property type="project" value="UniProtKB"/>
</dbReference>
<dbReference type="GO" id="GO:0015872">
    <property type="term" value="P:dopamine transport"/>
    <property type="evidence" value="ECO:0000303"/>
    <property type="project" value="UniProtKB"/>
</dbReference>
<dbReference type="GO" id="GO:0021782">
    <property type="term" value="P:glial cell development"/>
    <property type="evidence" value="ECO:0000315"/>
    <property type="project" value="UniProtKB"/>
</dbReference>
<dbReference type="GO" id="GO:0006886">
    <property type="term" value="P:intracellular protein transport"/>
    <property type="evidence" value="ECO:0000318"/>
    <property type="project" value="GO_Central"/>
</dbReference>
<dbReference type="GO" id="GO:0060292">
    <property type="term" value="P:long-term synaptic depression"/>
    <property type="evidence" value="ECO:0000314"/>
    <property type="project" value="UniProtKB"/>
</dbReference>
<dbReference type="GO" id="GO:0015844">
    <property type="term" value="P:monoamine transport"/>
    <property type="evidence" value="ECO:0000250"/>
    <property type="project" value="UniProtKB"/>
</dbReference>
<dbReference type="GO" id="GO:0034316">
    <property type="term" value="P:negative regulation of Arp2/3 complex-mediated actin nucleation"/>
    <property type="evidence" value="ECO:0000314"/>
    <property type="project" value="UniProtKB"/>
</dbReference>
<dbReference type="GO" id="GO:0010629">
    <property type="term" value="P:negative regulation of gene expression"/>
    <property type="evidence" value="ECO:0000315"/>
    <property type="project" value="ParkinsonsUK-UCL"/>
</dbReference>
<dbReference type="GO" id="GO:0002092">
    <property type="term" value="P:positive regulation of receptor internalization"/>
    <property type="evidence" value="ECO:0000314"/>
    <property type="project" value="UniProtKB"/>
</dbReference>
<dbReference type="GO" id="GO:0006468">
    <property type="term" value="P:protein phosphorylation"/>
    <property type="evidence" value="ECO:0000314"/>
    <property type="project" value="UniProtKB"/>
</dbReference>
<dbReference type="GO" id="GO:0006605">
    <property type="term" value="P:protein targeting"/>
    <property type="evidence" value="ECO:0000266"/>
    <property type="project" value="RGD"/>
</dbReference>
<dbReference type="GO" id="GO:0043113">
    <property type="term" value="P:receptor clustering"/>
    <property type="evidence" value="ECO:0000315"/>
    <property type="project" value="UniProtKB"/>
</dbReference>
<dbReference type="GO" id="GO:0034315">
    <property type="term" value="P:regulation of Arp2/3 complex-mediated actin nucleation"/>
    <property type="evidence" value="ECO:0000318"/>
    <property type="project" value="GO_Central"/>
</dbReference>
<dbReference type="GO" id="GO:0050796">
    <property type="term" value="P:regulation of insulin secretion"/>
    <property type="evidence" value="ECO:0000266"/>
    <property type="project" value="RGD"/>
</dbReference>
<dbReference type="GO" id="GO:0099149">
    <property type="term" value="P:regulation of postsynaptic neurotransmitter receptor internalization"/>
    <property type="evidence" value="ECO:0000314"/>
    <property type="project" value="SynGO"/>
</dbReference>
<dbReference type="CDD" id="cd07659">
    <property type="entry name" value="BAR_PICK1"/>
    <property type="match status" value="1"/>
</dbReference>
<dbReference type="CDD" id="cd06722">
    <property type="entry name" value="PDZ_PICK1-like"/>
    <property type="match status" value="1"/>
</dbReference>
<dbReference type="FunFam" id="1.20.1270.60:FF:000023">
    <property type="entry name" value="Interacting with PRKCA"/>
    <property type="match status" value="1"/>
</dbReference>
<dbReference type="FunFam" id="2.30.42.10:FF:000073">
    <property type="entry name" value="Interacting with PRKCA"/>
    <property type="match status" value="1"/>
</dbReference>
<dbReference type="Gene3D" id="2.30.42.10">
    <property type="match status" value="1"/>
</dbReference>
<dbReference type="Gene3D" id="1.20.1270.60">
    <property type="entry name" value="Arfaptin homology (AH) domain/BAR domain"/>
    <property type="match status" value="1"/>
</dbReference>
<dbReference type="InterPro" id="IPR027267">
    <property type="entry name" value="AH/BAR_dom_sf"/>
</dbReference>
<dbReference type="InterPro" id="IPR010504">
    <property type="entry name" value="AH_dom"/>
</dbReference>
<dbReference type="InterPro" id="IPR030798">
    <property type="entry name" value="Arfaptin_fam"/>
</dbReference>
<dbReference type="InterPro" id="IPR001478">
    <property type="entry name" value="PDZ"/>
</dbReference>
<dbReference type="InterPro" id="IPR036034">
    <property type="entry name" value="PDZ_sf"/>
</dbReference>
<dbReference type="InterPro" id="IPR037959">
    <property type="entry name" value="PICK1_BAR"/>
</dbReference>
<dbReference type="PANTHER" id="PTHR12141">
    <property type="entry name" value="ARFAPTIN-RELATED"/>
    <property type="match status" value="1"/>
</dbReference>
<dbReference type="PANTHER" id="PTHR12141:SF1">
    <property type="entry name" value="PRKCA-BINDING PROTEIN"/>
    <property type="match status" value="1"/>
</dbReference>
<dbReference type="Pfam" id="PF06456">
    <property type="entry name" value="Arfaptin"/>
    <property type="match status" value="1"/>
</dbReference>
<dbReference type="Pfam" id="PF00595">
    <property type="entry name" value="PDZ"/>
    <property type="match status" value="1"/>
</dbReference>
<dbReference type="SMART" id="SM01015">
    <property type="entry name" value="Arfaptin"/>
    <property type="match status" value="1"/>
</dbReference>
<dbReference type="SMART" id="SM00228">
    <property type="entry name" value="PDZ"/>
    <property type="match status" value="1"/>
</dbReference>
<dbReference type="SUPFAM" id="SSF103657">
    <property type="entry name" value="BAR/IMD domain-like"/>
    <property type="match status" value="1"/>
</dbReference>
<dbReference type="SUPFAM" id="SSF50156">
    <property type="entry name" value="PDZ domain-like"/>
    <property type="match status" value="1"/>
</dbReference>
<dbReference type="PROSITE" id="PS50870">
    <property type="entry name" value="AH"/>
    <property type="match status" value="1"/>
</dbReference>
<dbReference type="PROSITE" id="PS50106">
    <property type="entry name" value="PDZ"/>
    <property type="match status" value="1"/>
</dbReference>
<name>PICK1_RAT</name>
<proteinExistence type="evidence at protein level"/>
<sequence length="416" mass="46606">MFADLDYDIEEDKLGIPTVPGKVTLQKDAQNLIGISIGGGAQYCPCLYIVQVFDNTPAALDGTVAAGDEITGVNGRSIKGKTKVEVAKMIQEVKGEVTIHYNKLQADPKQGMSLDIVLKKVKHRLVENMSSGTADALGLSRAILCNDGLVKRLEELERTAELYKGMTEHTKNLLRAFYELSQTHRAFGDVFSVIGVREPQPAASEAFVKFADAHRSIEKFGIRLLKTIKPMLTDLNTYLNKAIPDTRLTIKKYLDVKFEYLSYCLKVKEMDDEEYSCIALGEPLYRVSTGNYEYRLILRCRQEARARFSQMRKDVLEKMELLDQKHVQDIVFQLQRFVSTMSKYYNDCYAVLRDADVFPIEVDLAHTTLAYGPNQGGFTDGEDEEEEEEDGAAREVSKDARGATGPTDKGGSWCDS</sequence>
<organism>
    <name type="scientific">Rattus norvegicus</name>
    <name type="common">Rat</name>
    <dbReference type="NCBI Taxonomy" id="10116"/>
    <lineage>
        <taxon>Eukaryota</taxon>
        <taxon>Metazoa</taxon>
        <taxon>Chordata</taxon>
        <taxon>Craniata</taxon>
        <taxon>Vertebrata</taxon>
        <taxon>Euteleostomi</taxon>
        <taxon>Mammalia</taxon>
        <taxon>Eutheria</taxon>
        <taxon>Euarchontoglires</taxon>
        <taxon>Glires</taxon>
        <taxon>Rodentia</taxon>
        <taxon>Myomorpha</taxon>
        <taxon>Muroidea</taxon>
        <taxon>Muridae</taxon>
        <taxon>Murinae</taxon>
        <taxon>Rattus</taxon>
    </lineage>
</organism>
<accession>Q9EP80</accession>
<accession>Q546X4</accession>
<accession>Q925D1</accession>
<reference key="1">
    <citation type="journal article" date="1999" name="Neuron">
        <title>Clustering of AMPA receptors by the synaptic PDZ domain-containing protein PICK1.</title>
        <authorList>
            <person name="Xia J."/>
            <person name="Zhang X."/>
            <person name="Staudinger J."/>
            <person name="Huganir R.L."/>
        </authorList>
    </citation>
    <scope>NUCLEOTIDE SEQUENCE [MRNA]</scope>
    <scope>INTERACTION WITH GRIA2; GRIA3 AND ISOFORM 4C OF GRIA4</scope>
    <scope>MUTAGENESIS OF 27-LYS-ASP-28</scope>
    <source>
        <strain>Sprague-Dawley</strain>
        <tissue>Brain</tissue>
    </source>
</reference>
<reference key="2">
    <citation type="journal article" date="2000" name="Eur. J. Neurosci.">
        <title>Interaction of the C-terminal tail region of the metabotropic glutamate receptor 7 with the protein kinase C substrate PICK1.</title>
        <authorList>
            <person name="El Far O."/>
            <person name="Airas J."/>
            <person name="Wischmeyer E."/>
            <person name="Nehring R.B."/>
            <person name="Karschin A."/>
            <person name="Betz H."/>
        </authorList>
    </citation>
    <scope>NUCLEOTIDE SEQUENCE [MRNA]</scope>
    <scope>INTERACTION WITH GRM4; GRM7; GRM8; GRIK3 AND PRKCA</scope>
    <scope>MUTAGENESIS OF 27-LYS-ASP-28</scope>
    <source>
        <tissue>Brain</tissue>
    </source>
</reference>
<reference key="3">
    <citation type="journal article" date="2001" name="Biochem. J.">
        <title>Mitogen-stimulated TIS21 protein interacts with a protein-kinase-Calpha-binding protein rPICK1.</title>
        <authorList>
            <person name="Lin W.-J."/>
            <person name="Chang Y.-F."/>
            <person name="Wang W.-L."/>
            <person name="Huang C.-Y.F."/>
        </authorList>
    </citation>
    <scope>NUCLEOTIDE SEQUENCE [MRNA]</scope>
    <scope>INTERACTION WITH BTG2</scope>
</reference>
<reference key="4">
    <citation type="submission" date="2002-08" db="EMBL/GenBank/DDBJ databases">
        <title>Interaction of glutamate transporter GLT1b with PICK1, a protein regulating targeting and trafficking at excitatory synapses.</title>
        <authorList>
            <person name="Chen W."/>
            <person name="Rosenberg P.A."/>
        </authorList>
    </citation>
    <scope>NUCLEOTIDE SEQUENCE [MRNA]</scope>
    <source>
        <strain>Sprague-Dawley</strain>
        <tissue>Brain</tissue>
    </source>
</reference>
<reference key="5">
    <citation type="journal article" date="1999" name="Neuropharmacology">
        <title>The protein kinase C alpha binding protein PICK1 interacts with short but not long form alternative splice variants of AMPA receptor subunits.</title>
        <authorList>
            <person name="Dev K.K."/>
            <person name="Nishimune A."/>
            <person name="Henley J.M."/>
            <person name="Nakanishi S."/>
        </authorList>
    </citation>
    <scope>INTERACTION WITH GRIA2; GRIA3 AND GRIA4 ISOFORM 4C</scope>
</reference>
<reference key="6">
    <citation type="journal article" date="2001" name="J. Biol. Chem.">
        <title>Molecular determinants for PICK1 synaptic aggregation and mGluR7a receptor coclustering: role of the PDZ, coiled-coil, and acidic domains.</title>
        <authorList>
            <person name="Boudin H."/>
            <person name="Craig A.M."/>
        </authorList>
    </citation>
    <scope>CHARACTERIZATION</scope>
    <scope>MUTAGENESIS OF 27-LYS-ASP-28</scope>
</reference>
<reference key="7">
    <citation type="journal article" date="2002" name="Neuron">
        <title>NSF ATPase and alpha-/beta-SNAPs disassemble the AMPA receptor-PICK1 complex.</title>
        <authorList>
            <person name="Hanley J.G."/>
            <person name="Khatri L."/>
            <person name="Hanson P.I."/>
            <person name="Ziff E.B."/>
        </authorList>
    </citation>
    <scope>INTERACTION WITH NAPA AND NAPB</scope>
</reference>
<reference key="8">
    <citation type="journal article" date="2003" name="J. Neurosci.">
        <title>Surface expression of the netrin receptor UNC5H1 is regulated through a protein kinase C-interacting protein/protein kinase-dependent mechanism.</title>
        <authorList>
            <person name="Williams M.E."/>
            <person name="Wu S.C.-Y."/>
            <person name="McKenna W.L."/>
            <person name="Hinck L."/>
        </authorList>
    </citation>
    <scope>INTERACTION WITH UNC5A</scope>
</reference>
<reference key="9">
    <citation type="journal article" date="2005" name="EMBO J.">
        <title>PICK1 is a calcium-sensor for NMDA-induced AMPA receptor trafficking.</title>
        <authorList>
            <person name="Hanley J.G."/>
            <person name="Henley J.M."/>
        </authorList>
    </citation>
    <scope>FUNCTION</scope>
    <scope>CALCIUM-BINDING</scope>
</reference>
<reference key="10">
    <citation type="journal article" date="2008" name="J. Neurochem.">
        <title>Zinc binding site in PICK1 is dominantly located at the CPC motif of its PDZ domain.</title>
        <authorList>
            <person name="Shi Y."/>
            <person name="Zhang L."/>
            <person name="Yuan J."/>
            <person name="Xiao H."/>
            <person name="Yang X."/>
            <person name="Niu L."/>
        </authorList>
    </citation>
    <scope>ZINC-BINDING SITES</scope>
</reference>
<reference key="11">
    <citation type="journal article" date="2008" name="Nat. Cell Biol.">
        <title>Inhibition of Arp2/3-mediated actin polymerization by PICK1 regulates neuronal morphology and AMPA receptor endocytosis.</title>
        <authorList>
            <person name="Rocca D.L."/>
            <person name="Martin S."/>
            <person name="Jenkins E.L."/>
            <person name="Hanley J.G."/>
        </authorList>
    </citation>
    <scope>FUNCTION</scope>
    <scope>ACTIN-BINDING</scope>
    <scope>ASSOCIATION WITH THE ARP2/3 COMPLEX</scope>
    <scope>MUTAGENESIS OF 251-LYS-LYS-252 AND TRP-413</scope>
</reference>
<reference key="12">
    <citation type="journal article" date="2008" name="Neuron">
        <title>Metabotropic glutamate receptor-mediated LTD involves two interacting Ca(2+) sensors, NCS-1 and PICK1.</title>
        <authorList>
            <person name="Jo J."/>
            <person name="Heon S."/>
            <person name="Kim M.J."/>
            <person name="Son G.H."/>
            <person name="Park Y."/>
            <person name="Henley J.M."/>
            <person name="Weiss J.L."/>
            <person name="Sheng M."/>
            <person name="Collingridge G.L."/>
            <person name="Cho K."/>
        </authorList>
    </citation>
    <scope>INTERACTION WITH NCS1</scope>
</reference>
<reference key="13">
    <citation type="journal article" date="2011" name="EMBO J.">
        <title>PICK1 inhibition of the Arp2/3 complex controls dendritic spine size and synaptic plasticity.</title>
        <authorList>
            <person name="Nakamura Y."/>
            <person name="Wood C.L."/>
            <person name="Patton A.P."/>
            <person name="Jaafari N."/>
            <person name="Henley J.M."/>
            <person name="Mellor J.R."/>
            <person name="Hanley J.G."/>
        </authorList>
    </citation>
    <scope>FUNCTION</scope>
</reference>
<reference key="14">
    <citation type="journal article" date="2012" name="Nat. Commun.">
        <title>Quantitative maps of protein phosphorylation sites across 14 different rat organs and tissues.</title>
        <authorList>
            <person name="Lundby A."/>
            <person name="Secher A."/>
            <person name="Lage K."/>
            <person name="Nordsborg N.B."/>
            <person name="Dmytriyev A."/>
            <person name="Lundby C."/>
            <person name="Olsen J.V."/>
        </authorList>
    </citation>
    <scope>IDENTIFICATION BY MASS SPECTROMETRY [LARGE SCALE ANALYSIS]</scope>
</reference>
<reference key="15">
    <citation type="journal article" date="2013" name="J. Cell Sci.">
        <title>The antagonistic modulation of Arp2/3 activity by N-WASP, WAVE2 and PICK1 defines dynamic changes in astrocyte morphology.</title>
        <authorList>
            <person name="Murk K."/>
            <person name="Blanco Suarez E.M."/>
            <person name="Cockbill L.M."/>
            <person name="Banks P."/>
            <person name="Hanley J.G."/>
        </authorList>
    </citation>
    <scope>FUNCTION</scope>
</reference>
<reference key="16">
    <citation type="journal article" date="2013" name="Neuron">
        <title>The small GTPase Arf1 modulates Arp2/3-mediated actin polymerization via PICK1 to regulate synaptic plasticity.</title>
        <authorList>
            <person name="Rocca D.L."/>
            <person name="Amici M."/>
            <person name="Antoniou A."/>
            <person name="Suarez E.B."/>
            <person name="Halemani N."/>
            <person name="Murk K."/>
            <person name="McGarvey J."/>
            <person name="Jaafari N."/>
            <person name="Mellor J.R."/>
            <person name="Collingridge G.L."/>
            <person name="Hanley J.G."/>
        </authorList>
    </citation>
    <scope>INTERACTION WITH ARF1</scope>
    <scope>SUBCELLULAR LOCATION</scope>
    <scope>MUTAGENESIS OF 27-LYS-ASP-28</scope>
</reference>
<reference key="17">
    <citation type="journal article" date="2007" name="EMBO J.">
        <title>Clustering and synaptic targeting of PICK1 requires direct interaction between the PDZ domain and lipid membranes.</title>
        <authorList>
            <person name="Pan L."/>
            <person name="Wu H."/>
            <person name="Shen C."/>
            <person name="Shi Y."/>
            <person name="Jin W."/>
            <person name="Xia J."/>
            <person name="Zhang M."/>
        </authorList>
    </citation>
    <scope>STRUCTURE BY NMR OF 18-104 IN COMPLEX WITH GRIA2</scope>
    <scope>INTERACTION WITH GRIA2</scope>
    <scope>MUTAGENESIS OF CYS-44; CYS-46; LYS-79 AND LYS-81</scope>
</reference>
<comment type="function">
    <text evidence="14 16 18 19">Probable adapter protein that bind to and organize the subcellular localization of a variety of membrane proteins containing some PDZ recognition sequence. Involved in the clustering of various receptors, possibly by acting at the receptor internalization level. Plays a role in synaptic plasticity by regulating the trafficking and internalization of AMPA receptors. May be regulated upon PRKCA activation. May regulate ASIC1/ASIC3 channel. Regulates actin polymerization by inhibiting the actin-nucleating activity of the Arp2/3 complex; the function is competitive with nucleation promoting factors and is linked to neuronal morphology regulation and AMPA receptor (AMPAR) endocytosis. Via interaction with the Arp2/3 complex involved in regulation of synaptic plasicity of excitatory synapses and required for spine shrinkage during long-term depression (LTD). Involved in regulation of astrocyte morphology, antagonistic to Arp2/3 complex activator WASL/N-WASP function.</text>
</comment>
<comment type="subunit">
    <text evidence="2 3 7 8 9 10 12 13 15 17 20">Monomer and homodimer. Interacts with CXADR. Interacts presynaptically with the glutamate receptors GRIA2, GRIA3, GRIK3, isoform 3 of GRIA4, isoform A of GRM4, GRM7 and GRM8; with NAPA and NAPB; and with BTG2. The interaction with NAPA and NAPB disrupts the interaction with GRIA2, conducting to the internalization of GRIA2. Interacts with PRKCA; with the amine transporters SLC6A2 and SLC6A3; with the channels ASIC1 and ASIC2; with the GTP-binding proteins ARF1 and ARF3; with the ephrin receptor tyrosine kinases EPHA7, EPHB1 and EPHB2; with ERBB2 and through its PDZ domain with the C-terminal tail of PRLHR (By similarity). Interacts with UNC5A. Interacts (via AH domain) with NCS1/FREQ; in a calcium-dependent manner. Interacts with F-actin and associates with the ARP2/3 complex. Interacts (via PDZ domain) with ARF1 (activated); the interaction blocks Arp2/3 complex inhibition. Interacts with SORCS3 (By similarity).</text>
</comment>
<comment type="interaction">
    <interactant intactId="EBI-77728">
        <id>Q9EP80</id>
    </interactant>
    <interactant intactId="EBI-78953">
        <id>P27049</id>
        <label>Btg2</label>
    </interactant>
    <organismsDiffer>false</organismsDiffer>
    <experiments>3</experiments>
</comment>
<comment type="interaction">
    <interactant intactId="EBI-77728">
        <id>Q9EP80</id>
    </interactant>
    <interactant intactId="EBI-77718">
        <id>P19491</id>
        <label>Gria2</label>
    </interactant>
    <organismsDiffer>false</organismsDiffer>
    <experiments>13</experiments>
</comment>
<comment type="interaction">
    <interactant intactId="EBI-77728">
        <id>Q9EP80</id>
    </interactant>
    <interactant intactId="EBI-77764">
        <id>P19492</id>
        <label>Gria3</label>
    </interactant>
    <organismsDiffer>false</organismsDiffer>
    <experiments>7</experiments>
</comment>
<comment type="interaction">
    <interactant intactId="EBI-77728">
        <id>Q9EP80</id>
    </interactant>
    <interactant intactId="EBI-6936416">
        <id>P35400</id>
        <label>Grm7</label>
    </interactant>
    <organismsDiffer>false</organismsDiffer>
    <experiments>2</experiments>
</comment>
<comment type="interaction">
    <interactant intactId="EBI-77728">
        <id>Q9EP80</id>
    </interactant>
    <interactant intactId="EBI-6935714">
        <id>Q63337</id>
        <label>mGluR7</label>
    </interactant>
    <organismsDiffer>false</organismsDiffer>
    <experiments>2</experiments>
</comment>
<comment type="interaction">
    <interactant intactId="EBI-77728">
        <id>Q9EP80</id>
    </interactant>
    <interactant intactId="EBI-77728">
        <id>Q9EP80</id>
        <label>Pick1</label>
    </interactant>
    <organismsDiffer>false</organismsDiffer>
    <experiments>6</experiments>
</comment>
<comment type="interaction">
    <interactant intactId="EBI-77728">
        <id>Q9EP80</id>
    </interactant>
    <interactant intactId="EBI-3909876">
        <id>P42262</id>
        <label>GRIA2</label>
    </interactant>
    <organismsDiffer>true</organismsDiffer>
    <experiments>2</experiments>
</comment>
<comment type="interaction">
    <interactant intactId="EBI-77728">
        <id>Q9EP80</id>
    </interactant>
    <interactant intactId="EBI-6661445">
        <id>Q01959</id>
        <label>SLC6A3</label>
    </interactant>
    <organismsDiffer>true</organismsDiffer>
    <experiments>2</experiments>
</comment>
<comment type="subcellular location">
    <subcellularLocation>
        <location evidence="20">Cytoplasm</location>
        <location evidence="20">Perinuclear region</location>
    </subcellularLocation>
    <subcellularLocation>
        <location evidence="20">Membrane</location>
        <topology evidence="20">Peripheral membrane protein</topology>
    </subcellularLocation>
    <subcellularLocation>
        <location evidence="2">Membrane</location>
        <topology evidence="2">Lipid-anchor</topology>
    </subcellularLocation>
    <subcellularLocation>
        <location evidence="20">Postsynaptic density</location>
    </subcellularLocation>
    <subcellularLocation>
        <location evidence="20">Synapse</location>
        <location evidence="20">Synaptosome</location>
    </subcellularLocation>
    <subcellularLocation>
        <location evidence="20">Cytoplasm</location>
        <location evidence="20">Cytoskeleton</location>
    </subcellularLocation>
    <text>Also membrane-associated, present at excitatory synapses.</text>
</comment>
<comment type="tissue specificity">
    <text>Ubiquitous.</text>
</comment>
<comment type="developmental stage">
    <text>Expressed early in development (15 dpc), and gradually increases, reaching a peak at around 2 weeks after birth.</text>
</comment>
<comment type="domain">
    <text>The AH domain mediates binding to F-actin.</text>
</comment>
<comment type="domain">
    <text>The unoccupied PDZ domain is probably involved in allosteric modulation by forming an intramolecular bridge with the AH domain leading to a 'closed' formation. Binding of a PDZ ligand, such as GRIA2, allows enhanced interactions with F-actin and the Arp2/3 complex thus enhanced inhibition of actin polymerization.</text>
</comment>
<comment type="PTM">
    <text evidence="1">Phosphorylation at Thr-82 appears to inhibit the interaction with AMPA receptors.</text>
</comment>
<comment type="PTM">
    <text evidence="1">Palmitoylation on Cys-414 is essential for long-term synaptic depression (LTD).</text>
</comment>
<evidence type="ECO:0000250" key="1"/>
<evidence type="ECO:0000250" key="2">
    <source>
        <dbReference type="UniProtKB" id="Q62083"/>
    </source>
</evidence>
<evidence type="ECO:0000250" key="3">
    <source>
        <dbReference type="UniProtKB" id="Q9NRD5"/>
    </source>
</evidence>
<evidence type="ECO:0000255" key="4">
    <source>
        <dbReference type="PROSITE-ProRule" id="PRU00143"/>
    </source>
</evidence>
<evidence type="ECO:0000255" key="5">
    <source>
        <dbReference type="PROSITE-ProRule" id="PRU00294"/>
    </source>
</evidence>
<evidence type="ECO:0000256" key="6">
    <source>
        <dbReference type="SAM" id="MobiDB-lite"/>
    </source>
</evidence>
<evidence type="ECO:0000269" key="7">
    <source>
    </source>
</evidence>
<evidence type="ECO:0000269" key="8">
    <source>
    </source>
</evidence>
<evidence type="ECO:0000269" key="9">
    <source>
    </source>
</evidence>
<evidence type="ECO:0000269" key="10">
    <source>
    </source>
</evidence>
<evidence type="ECO:0000269" key="11">
    <source>
    </source>
</evidence>
<evidence type="ECO:0000269" key="12">
    <source>
    </source>
</evidence>
<evidence type="ECO:0000269" key="13">
    <source>
    </source>
</evidence>
<evidence type="ECO:0000269" key="14">
    <source>
    </source>
</evidence>
<evidence type="ECO:0000269" key="15">
    <source>
    </source>
</evidence>
<evidence type="ECO:0000269" key="16">
    <source>
    </source>
</evidence>
<evidence type="ECO:0000269" key="17">
    <source>
    </source>
</evidence>
<evidence type="ECO:0000269" key="18">
    <source>
    </source>
</evidence>
<evidence type="ECO:0000269" key="19">
    <source>
    </source>
</evidence>
<evidence type="ECO:0000269" key="20">
    <source>
    </source>
</evidence>
<evidence type="ECO:0000305" key="21"/>
<evidence type="ECO:0007829" key="22">
    <source>
        <dbReference type="PDB" id="2LUI"/>
    </source>
</evidence>
<evidence type="ECO:0007829" key="23">
    <source>
        <dbReference type="PDB" id="2PKU"/>
    </source>
</evidence>
<evidence type="ECO:0007829" key="24">
    <source>
        <dbReference type="PDB" id="3HPK"/>
    </source>
</evidence>
<keyword id="KW-0002">3D-structure</keyword>
<keyword id="KW-0009">Actin-binding</keyword>
<keyword id="KW-0106">Calcium</keyword>
<keyword id="KW-0963">Cytoplasm</keyword>
<keyword id="KW-0206">Cytoskeleton</keyword>
<keyword id="KW-0449">Lipoprotein</keyword>
<keyword id="KW-0472">Membrane</keyword>
<keyword id="KW-0479">Metal-binding</keyword>
<keyword id="KW-0564">Palmitate</keyword>
<keyword id="KW-0597">Phosphoprotein</keyword>
<keyword id="KW-1185">Reference proteome</keyword>
<keyword id="KW-0770">Synapse</keyword>
<keyword id="KW-0771">Synaptosome</keyword>
<keyword id="KW-0862">Zinc</keyword>
<gene>
    <name type="primary">Pick1</name>
    <name type="synonym">Prkcabp</name>
</gene>